<feature type="chain" id="PRO_1000022706" description="Trigger factor">
    <location>
        <begin position="1"/>
        <end position="434"/>
    </location>
</feature>
<feature type="domain" description="PPIase FKBP-type" evidence="1">
    <location>
        <begin position="161"/>
        <end position="246"/>
    </location>
</feature>
<evidence type="ECO:0000255" key="1">
    <source>
        <dbReference type="HAMAP-Rule" id="MF_00303"/>
    </source>
</evidence>
<sequence>MQVSVETTSNIERRMTIGVPAQEIDQAVQKRLQETARTVRLNGFRPGKVPMSVVKRRFGDSIRQEVVGEAMRDNYIKALQEQDINPAGWPKLEPKTMEEGKDLEFVATFEVLPEIELGDLSKINVEKPVSEVADKDIDNMIDNLRRQQATMKEVKRKSKNKDIVTIDFKGSIDGEEFEGGSAEGHRLTLGSGQMIPGFEKGIVGGKAGEELEIDVTFPEDYHNEDLAGKDAKFAITIHKVEEPQLPELDQEFFKRFGIEAEDEVAFREEVKKNMERELKQAVSNKVKNDVVDGLLETTELEVPAALVDQEIDRLRQDAVQRFGGQVDFQQLPKEIFEEQAKRRVKTGLLFQEVVKKNDLKADEAKVEEKIQEIASTYEQPDEVVAHFNSNPDQKAQVESSVLEDAVVDFVLGAAKVKEKKMKYEEAVQAGQPQR</sequence>
<reference key="1">
    <citation type="journal article" date="2011" name="Appl. Environ. Microbiol.">
        <title>Genomic potential of Marinobacter aquaeolei, a biogeochemical 'opportunitroph'.</title>
        <authorList>
            <person name="Singer E."/>
            <person name="Webb E.A."/>
            <person name="Nelson W.C."/>
            <person name="Heidelberg J.F."/>
            <person name="Ivanova N."/>
            <person name="Pati A."/>
            <person name="Edwards K.J."/>
        </authorList>
    </citation>
    <scope>NUCLEOTIDE SEQUENCE [LARGE SCALE GENOMIC DNA]</scope>
    <source>
        <strain>ATCC 700491 / DSM 11845 / VT8</strain>
    </source>
</reference>
<comment type="function">
    <text evidence="1">Involved in protein export. Acts as a chaperone by maintaining the newly synthesized protein in an open conformation. Functions as a peptidyl-prolyl cis-trans isomerase.</text>
</comment>
<comment type="catalytic activity">
    <reaction evidence="1">
        <text>[protein]-peptidylproline (omega=180) = [protein]-peptidylproline (omega=0)</text>
        <dbReference type="Rhea" id="RHEA:16237"/>
        <dbReference type="Rhea" id="RHEA-COMP:10747"/>
        <dbReference type="Rhea" id="RHEA-COMP:10748"/>
        <dbReference type="ChEBI" id="CHEBI:83833"/>
        <dbReference type="ChEBI" id="CHEBI:83834"/>
        <dbReference type="EC" id="5.2.1.8"/>
    </reaction>
</comment>
<comment type="subcellular location">
    <subcellularLocation>
        <location>Cytoplasm</location>
    </subcellularLocation>
    <text evidence="1">About half TF is bound to the ribosome near the polypeptide exit tunnel while the other half is free in the cytoplasm.</text>
</comment>
<comment type="domain">
    <text evidence="1">Consists of 3 domains; the N-terminus binds the ribosome, the middle domain has PPIase activity, while the C-terminus has intrinsic chaperone activity on its own.</text>
</comment>
<comment type="similarity">
    <text evidence="1">Belongs to the FKBP-type PPIase family. Tig subfamily.</text>
</comment>
<gene>
    <name evidence="1" type="primary">tig</name>
    <name type="ordered locus">Maqu_1841</name>
</gene>
<keyword id="KW-0131">Cell cycle</keyword>
<keyword id="KW-0132">Cell division</keyword>
<keyword id="KW-0143">Chaperone</keyword>
<keyword id="KW-0963">Cytoplasm</keyword>
<keyword id="KW-0413">Isomerase</keyword>
<keyword id="KW-0697">Rotamase</keyword>
<accession>A1U1Q4</accession>
<dbReference type="EC" id="5.2.1.8" evidence="1"/>
<dbReference type="EMBL" id="CP000514">
    <property type="protein sequence ID" value="ABM18923.1"/>
    <property type="molecule type" value="Genomic_DNA"/>
</dbReference>
<dbReference type="RefSeq" id="WP_011785319.1">
    <property type="nucleotide sequence ID" value="NC_008740.1"/>
</dbReference>
<dbReference type="SMR" id="A1U1Q4"/>
<dbReference type="STRING" id="351348.Maqu_1841"/>
<dbReference type="KEGG" id="maq:Maqu_1841"/>
<dbReference type="eggNOG" id="COG0544">
    <property type="taxonomic scope" value="Bacteria"/>
</dbReference>
<dbReference type="HOGENOM" id="CLU_033058_2_0_6"/>
<dbReference type="OrthoDB" id="9767721at2"/>
<dbReference type="Proteomes" id="UP000000998">
    <property type="component" value="Chromosome"/>
</dbReference>
<dbReference type="GO" id="GO:0005737">
    <property type="term" value="C:cytoplasm"/>
    <property type="evidence" value="ECO:0007669"/>
    <property type="project" value="UniProtKB-SubCell"/>
</dbReference>
<dbReference type="GO" id="GO:0003755">
    <property type="term" value="F:peptidyl-prolyl cis-trans isomerase activity"/>
    <property type="evidence" value="ECO:0007669"/>
    <property type="project" value="UniProtKB-UniRule"/>
</dbReference>
<dbReference type="GO" id="GO:0044183">
    <property type="term" value="F:protein folding chaperone"/>
    <property type="evidence" value="ECO:0007669"/>
    <property type="project" value="TreeGrafter"/>
</dbReference>
<dbReference type="GO" id="GO:0043022">
    <property type="term" value="F:ribosome binding"/>
    <property type="evidence" value="ECO:0007669"/>
    <property type="project" value="TreeGrafter"/>
</dbReference>
<dbReference type="GO" id="GO:0051083">
    <property type="term" value="P:'de novo' cotranslational protein folding"/>
    <property type="evidence" value="ECO:0007669"/>
    <property type="project" value="TreeGrafter"/>
</dbReference>
<dbReference type="GO" id="GO:0051301">
    <property type="term" value="P:cell division"/>
    <property type="evidence" value="ECO:0007669"/>
    <property type="project" value="UniProtKB-KW"/>
</dbReference>
<dbReference type="GO" id="GO:0061077">
    <property type="term" value="P:chaperone-mediated protein folding"/>
    <property type="evidence" value="ECO:0007669"/>
    <property type="project" value="TreeGrafter"/>
</dbReference>
<dbReference type="GO" id="GO:0015031">
    <property type="term" value="P:protein transport"/>
    <property type="evidence" value="ECO:0007669"/>
    <property type="project" value="UniProtKB-UniRule"/>
</dbReference>
<dbReference type="GO" id="GO:0043335">
    <property type="term" value="P:protein unfolding"/>
    <property type="evidence" value="ECO:0007669"/>
    <property type="project" value="TreeGrafter"/>
</dbReference>
<dbReference type="FunFam" id="3.10.50.40:FF:000001">
    <property type="entry name" value="Trigger factor"/>
    <property type="match status" value="1"/>
</dbReference>
<dbReference type="Gene3D" id="3.10.50.40">
    <property type="match status" value="1"/>
</dbReference>
<dbReference type="Gene3D" id="3.30.70.1050">
    <property type="entry name" value="Trigger factor ribosome-binding domain"/>
    <property type="match status" value="1"/>
</dbReference>
<dbReference type="Gene3D" id="1.10.3120.10">
    <property type="entry name" value="Trigger factor, C-terminal domain"/>
    <property type="match status" value="1"/>
</dbReference>
<dbReference type="HAMAP" id="MF_00303">
    <property type="entry name" value="Trigger_factor_Tig"/>
    <property type="match status" value="1"/>
</dbReference>
<dbReference type="InterPro" id="IPR046357">
    <property type="entry name" value="PPIase_dom_sf"/>
</dbReference>
<dbReference type="InterPro" id="IPR001179">
    <property type="entry name" value="PPIase_FKBP_dom"/>
</dbReference>
<dbReference type="InterPro" id="IPR005215">
    <property type="entry name" value="Trig_fac"/>
</dbReference>
<dbReference type="InterPro" id="IPR008880">
    <property type="entry name" value="Trigger_fac_C"/>
</dbReference>
<dbReference type="InterPro" id="IPR037041">
    <property type="entry name" value="Trigger_fac_C_sf"/>
</dbReference>
<dbReference type="InterPro" id="IPR008881">
    <property type="entry name" value="Trigger_fac_ribosome-bd_bac"/>
</dbReference>
<dbReference type="InterPro" id="IPR036611">
    <property type="entry name" value="Trigger_fac_ribosome-bd_sf"/>
</dbReference>
<dbReference type="InterPro" id="IPR027304">
    <property type="entry name" value="Trigger_fact/SurA_dom_sf"/>
</dbReference>
<dbReference type="NCBIfam" id="TIGR00115">
    <property type="entry name" value="tig"/>
    <property type="match status" value="1"/>
</dbReference>
<dbReference type="PANTHER" id="PTHR30560">
    <property type="entry name" value="TRIGGER FACTOR CHAPERONE AND PEPTIDYL-PROLYL CIS/TRANS ISOMERASE"/>
    <property type="match status" value="1"/>
</dbReference>
<dbReference type="PANTHER" id="PTHR30560:SF3">
    <property type="entry name" value="TRIGGER FACTOR-LIKE PROTEIN TIG, CHLOROPLASTIC"/>
    <property type="match status" value="1"/>
</dbReference>
<dbReference type="Pfam" id="PF00254">
    <property type="entry name" value="FKBP_C"/>
    <property type="match status" value="1"/>
</dbReference>
<dbReference type="Pfam" id="PF05698">
    <property type="entry name" value="Trigger_C"/>
    <property type="match status" value="1"/>
</dbReference>
<dbReference type="Pfam" id="PF05697">
    <property type="entry name" value="Trigger_N"/>
    <property type="match status" value="1"/>
</dbReference>
<dbReference type="PIRSF" id="PIRSF003095">
    <property type="entry name" value="Trigger_factor"/>
    <property type="match status" value="1"/>
</dbReference>
<dbReference type="SUPFAM" id="SSF54534">
    <property type="entry name" value="FKBP-like"/>
    <property type="match status" value="1"/>
</dbReference>
<dbReference type="SUPFAM" id="SSF109998">
    <property type="entry name" value="Triger factor/SurA peptide-binding domain-like"/>
    <property type="match status" value="1"/>
</dbReference>
<dbReference type="SUPFAM" id="SSF102735">
    <property type="entry name" value="Trigger factor ribosome-binding domain"/>
    <property type="match status" value="1"/>
</dbReference>
<dbReference type="PROSITE" id="PS50059">
    <property type="entry name" value="FKBP_PPIASE"/>
    <property type="match status" value="1"/>
</dbReference>
<proteinExistence type="inferred from homology"/>
<name>TIG_MARN8</name>
<organism>
    <name type="scientific">Marinobacter nauticus (strain ATCC 700491 / DSM 11845 / VT8)</name>
    <name type="common">Marinobacter aquaeolei</name>
    <dbReference type="NCBI Taxonomy" id="351348"/>
    <lineage>
        <taxon>Bacteria</taxon>
        <taxon>Pseudomonadati</taxon>
        <taxon>Pseudomonadota</taxon>
        <taxon>Gammaproteobacteria</taxon>
        <taxon>Pseudomonadales</taxon>
        <taxon>Marinobacteraceae</taxon>
        <taxon>Marinobacter</taxon>
    </lineage>
</organism>
<protein>
    <recommendedName>
        <fullName evidence="1">Trigger factor</fullName>
        <shortName evidence="1">TF</shortName>
        <ecNumber evidence="1">5.2.1.8</ecNumber>
    </recommendedName>
    <alternativeName>
        <fullName evidence="1">PPIase</fullName>
    </alternativeName>
</protein>